<sequence length="293" mass="33933">MDTELLKTFLEVSRTRHFGRAAESLYLTQSAVSFRIRQLENQLGANLFTRHRNNIRLTPAGERLVPYAEMLLNTWRLAKKEVIHSLQHTELSIGATASLWEAYLTPWLQQLYEQQEELRLEARIALRNSLVKQLHERQLDLLITTEPPKMDELACLLLGHFSLRLYSSFSLDLPKEDDTPNEHKNASEVPYIKLEWGADFHQQENRLLDSEQAPILTTTSAHLTRQLLETTGGCAFLPEHWQKEYPQLVIHPDIPPIVRPLYAVWLQNSDQQALIRQLLKTPMNNATQSVTRE</sequence>
<name>HDFR_YERPY</name>
<reference key="1">
    <citation type="submission" date="2008-02" db="EMBL/GenBank/DDBJ databases">
        <title>Complete sequence of Yersinia pseudotuberculosis YPIII.</title>
        <authorList>
            <consortium name="US DOE Joint Genome Institute"/>
            <person name="Copeland A."/>
            <person name="Lucas S."/>
            <person name="Lapidus A."/>
            <person name="Glavina del Rio T."/>
            <person name="Dalin E."/>
            <person name="Tice H."/>
            <person name="Bruce D."/>
            <person name="Goodwin L."/>
            <person name="Pitluck S."/>
            <person name="Munk A.C."/>
            <person name="Brettin T."/>
            <person name="Detter J.C."/>
            <person name="Han C."/>
            <person name="Tapia R."/>
            <person name="Schmutz J."/>
            <person name="Larimer F."/>
            <person name="Land M."/>
            <person name="Hauser L."/>
            <person name="Challacombe J.F."/>
            <person name="Green L."/>
            <person name="Lindler L.E."/>
            <person name="Nikolich M.P."/>
            <person name="Richardson P."/>
        </authorList>
    </citation>
    <scope>NUCLEOTIDE SEQUENCE [LARGE SCALE GENOMIC DNA]</scope>
    <source>
        <strain>YPIII</strain>
    </source>
</reference>
<gene>
    <name evidence="1" type="primary">hdfR</name>
    <name type="ordered locus">YPK_4064</name>
</gene>
<comment type="function">
    <text evidence="1">Negatively regulates the transcription of the flagellar master operon flhDC by binding to the upstream region of the operon.</text>
</comment>
<comment type="similarity">
    <text evidence="2">Belongs to the LysR transcriptional regulatory family.</text>
</comment>
<feature type="chain" id="PRO_1000139680" description="HTH-type transcriptional regulator HdfR">
    <location>
        <begin position="1"/>
        <end position="293"/>
    </location>
</feature>
<feature type="domain" description="HTH lysR-type" evidence="1">
    <location>
        <begin position="1"/>
        <end position="58"/>
    </location>
</feature>
<feature type="DNA-binding region" description="H-T-H motif" evidence="1">
    <location>
        <begin position="18"/>
        <end position="37"/>
    </location>
</feature>
<dbReference type="EMBL" id="CP000950">
    <property type="protein sequence ID" value="ACA70326.1"/>
    <property type="molecule type" value="Genomic_DNA"/>
</dbReference>
<dbReference type="RefSeq" id="WP_002212020.1">
    <property type="nucleotide sequence ID" value="NZ_CP009792.1"/>
</dbReference>
<dbReference type="SMR" id="B1JQ39"/>
<dbReference type="GeneID" id="57974802"/>
<dbReference type="KEGG" id="ypy:YPK_4064"/>
<dbReference type="PATRIC" id="fig|502800.11.peg.415"/>
<dbReference type="GO" id="GO:0003677">
    <property type="term" value="F:DNA binding"/>
    <property type="evidence" value="ECO:0007669"/>
    <property type="project" value="UniProtKB-KW"/>
</dbReference>
<dbReference type="GO" id="GO:0003700">
    <property type="term" value="F:DNA-binding transcription factor activity"/>
    <property type="evidence" value="ECO:0007669"/>
    <property type="project" value="UniProtKB-UniRule"/>
</dbReference>
<dbReference type="GO" id="GO:0045892">
    <property type="term" value="P:negative regulation of DNA-templated transcription"/>
    <property type="evidence" value="ECO:0007669"/>
    <property type="project" value="UniProtKB-UniRule"/>
</dbReference>
<dbReference type="CDD" id="cd05466">
    <property type="entry name" value="PBP2_LTTR_substrate"/>
    <property type="match status" value="1"/>
</dbReference>
<dbReference type="FunFam" id="1.10.10.10:FF:000001">
    <property type="entry name" value="LysR family transcriptional regulator"/>
    <property type="match status" value="1"/>
</dbReference>
<dbReference type="Gene3D" id="3.40.190.10">
    <property type="entry name" value="Periplasmic binding protein-like II"/>
    <property type="match status" value="2"/>
</dbReference>
<dbReference type="Gene3D" id="1.10.10.10">
    <property type="entry name" value="Winged helix-like DNA-binding domain superfamily/Winged helix DNA-binding domain"/>
    <property type="match status" value="1"/>
</dbReference>
<dbReference type="HAMAP" id="MF_01233">
    <property type="entry name" value="HTH_type_HdfR"/>
    <property type="match status" value="1"/>
</dbReference>
<dbReference type="InterPro" id="IPR050176">
    <property type="entry name" value="LTTR"/>
</dbReference>
<dbReference type="InterPro" id="IPR005119">
    <property type="entry name" value="LysR_subst-bd"/>
</dbReference>
<dbReference type="InterPro" id="IPR020890">
    <property type="entry name" value="Tscrpt_reg_HTH_HdfR"/>
</dbReference>
<dbReference type="InterPro" id="IPR000847">
    <property type="entry name" value="Tscrpt_reg_HTH_LysR"/>
</dbReference>
<dbReference type="InterPro" id="IPR036388">
    <property type="entry name" value="WH-like_DNA-bd_sf"/>
</dbReference>
<dbReference type="InterPro" id="IPR036390">
    <property type="entry name" value="WH_DNA-bd_sf"/>
</dbReference>
<dbReference type="NCBIfam" id="NF002946">
    <property type="entry name" value="PRK03601.1"/>
    <property type="match status" value="1"/>
</dbReference>
<dbReference type="PANTHER" id="PTHR30579:SF8">
    <property type="entry name" value="HTH-TYPE TRANSCRIPTIONAL REGULATOR HDFR"/>
    <property type="match status" value="1"/>
</dbReference>
<dbReference type="PANTHER" id="PTHR30579">
    <property type="entry name" value="TRANSCRIPTIONAL REGULATOR"/>
    <property type="match status" value="1"/>
</dbReference>
<dbReference type="Pfam" id="PF00126">
    <property type="entry name" value="HTH_1"/>
    <property type="match status" value="1"/>
</dbReference>
<dbReference type="Pfam" id="PF03466">
    <property type="entry name" value="LysR_substrate"/>
    <property type="match status" value="1"/>
</dbReference>
<dbReference type="PRINTS" id="PR00039">
    <property type="entry name" value="HTHLYSR"/>
</dbReference>
<dbReference type="SUPFAM" id="SSF53850">
    <property type="entry name" value="Periplasmic binding protein-like II"/>
    <property type="match status" value="1"/>
</dbReference>
<dbReference type="SUPFAM" id="SSF46785">
    <property type="entry name" value="Winged helix' DNA-binding domain"/>
    <property type="match status" value="1"/>
</dbReference>
<dbReference type="PROSITE" id="PS50931">
    <property type="entry name" value="HTH_LYSR"/>
    <property type="match status" value="1"/>
</dbReference>
<keyword id="KW-0238">DNA-binding</keyword>
<keyword id="KW-0678">Repressor</keyword>
<keyword id="KW-0804">Transcription</keyword>
<keyword id="KW-0805">Transcription regulation</keyword>
<proteinExistence type="inferred from homology"/>
<evidence type="ECO:0000255" key="1">
    <source>
        <dbReference type="HAMAP-Rule" id="MF_01233"/>
    </source>
</evidence>
<evidence type="ECO:0000305" key="2"/>
<protein>
    <recommendedName>
        <fullName evidence="1">HTH-type transcriptional regulator HdfR</fullName>
    </recommendedName>
    <alternativeName>
        <fullName evidence="1">H-NS-dependent flhDC regulator</fullName>
    </alternativeName>
</protein>
<organism>
    <name type="scientific">Yersinia pseudotuberculosis serotype O:3 (strain YPIII)</name>
    <dbReference type="NCBI Taxonomy" id="502800"/>
    <lineage>
        <taxon>Bacteria</taxon>
        <taxon>Pseudomonadati</taxon>
        <taxon>Pseudomonadota</taxon>
        <taxon>Gammaproteobacteria</taxon>
        <taxon>Enterobacterales</taxon>
        <taxon>Yersiniaceae</taxon>
        <taxon>Yersinia</taxon>
    </lineage>
</organism>
<accession>B1JQ39</accession>